<gene>
    <name evidence="1" type="primary">rpmF</name>
    <name type="ordered locus">MCA2005</name>
</gene>
<keyword id="KW-1185">Reference proteome</keyword>
<keyword id="KW-0687">Ribonucleoprotein</keyword>
<keyword id="KW-0689">Ribosomal protein</keyword>
<accession>Q606L1</accession>
<evidence type="ECO:0000255" key="1">
    <source>
        <dbReference type="HAMAP-Rule" id="MF_00340"/>
    </source>
</evidence>
<evidence type="ECO:0000256" key="2">
    <source>
        <dbReference type="SAM" id="MobiDB-lite"/>
    </source>
</evidence>
<evidence type="ECO:0000305" key="3"/>
<proteinExistence type="inferred from homology"/>
<reference key="1">
    <citation type="journal article" date="2004" name="PLoS Biol.">
        <title>Genomic insights into methanotrophy: the complete genome sequence of Methylococcus capsulatus (Bath).</title>
        <authorList>
            <person name="Ward N.L."/>
            <person name="Larsen O."/>
            <person name="Sakwa J."/>
            <person name="Bruseth L."/>
            <person name="Khouri H.M."/>
            <person name="Durkin A.S."/>
            <person name="Dimitrov G."/>
            <person name="Jiang L."/>
            <person name="Scanlan D."/>
            <person name="Kang K.H."/>
            <person name="Lewis M.R."/>
            <person name="Nelson K.E."/>
            <person name="Methe B.A."/>
            <person name="Wu M."/>
            <person name="Heidelberg J.F."/>
            <person name="Paulsen I.T."/>
            <person name="Fouts D.E."/>
            <person name="Ravel J."/>
            <person name="Tettelin H."/>
            <person name="Ren Q."/>
            <person name="Read T.D."/>
            <person name="DeBoy R.T."/>
            <person name="Seshadri R."/>
            <person name="Salzberg S.L."/>
            <person name="Jensen H.B."/>
            <person name="Birkeland N.K."/>
            <person name="Nelson W.C."/>
            <person name="Dodson R.J."/>
            <person name="Grindhaug S.H."/>
            <person name="Holt I.E."/>
            <person name="Eidhammer I."/>
            <person name="Jonasen I."/>
            <person name="Vanaken S."/>
            <person name="Utterback T.R."/>
            <person name="Feldblyum T.V."/>
            <person name="Fraser C.M."/>
            <person name="Lillehaug J.R."/>
            <person name="Eisen J.A."/>
        </authorList>
    </citation>
    <scope>NUCLEOTIDE SEQUENCE [LARGE SCALE GENOMIC DNA]</scope>
    <source>
        <strain>ATCC 33009 / NCIMB 11132 / Bath</strain>
    </source>
</reference>
<protein>
    <recommendedName>
        <fullName evidence="1">Large ribosomal subunit protein bL32</fullName>
    </recommendedName>
    <alternativeName>
        <fullName evidence="3">50S ribosomal protein L32</fullName>
    </alternativeName>
</protein>
<name>RL32_METCA</name>
<dbReference type="EMBL" id="AE017282">
    <property type="protein sequence ID" value="AAU91774.1"/>
    <property type="molecule type" value="Genomic_DNA"/>
</dbReference>
<dbReference type="RefSeq" id="WP_010961250.1">
    <property type="nucleotide sequence ID" value="NC_002977.6"/>
</dbReference>
<dbReference type="SMR" id="Q606L1"/>
<dbReference type="STRING" id="243233.MCA2005"/>
<dbReference type="GeneID" id="88224233"/>
<dbReference type="KEGG" id="mca:MCA2005"/>
<dbReference type="eggNOG" id="COG0333">
    <property type="taxonomic scope" value="Bacteria"/>
</dbReference>
<dbReference type="HOGENOM" id="CLU_129084_2_1_6"/>
<dbReference type="Proteomes" id="UP000006821">
    <property type="component" value="Chromosome"/>
</dbReference>
<dbReference type="GO" id="GO:0015934">
    <property type="term" value="C:large ribosomal subunit"/>
    <property type="evidence" value="ECO:0007669"/>
    <property type="project" value="InterPro"/>
</dbReference>
<dbReference type="GO" id="GO:0003735">
    <property type="term" value="F:structural constituent of ribosome"/>
    <property type="evidence" value="ECO:0007669"/>
    <property type="project" value="InterPro"/>
</dbReference>
<dbReference type="GO" id="GO:0006412">
    <property type="term" value="P:translation"/>
    <property type="evidence" value="ECO:0007669"/>
    <property type="project" value="UniProtKB-UniRule"/>
</dbReference>
<dbReference type="HAMAP" id="MF_00340">
    <property type="entry name" value="Ribosomal_bL32"/>
    <property type="match status" value="1"/>
</dbReference>
<dbReference type="InterPro" id="IPR002677">
    <property type="entry name" value="Ribosomal_bL32"/>
</dbReference>
<dbReference type="InterPro" id="IPR044957">
    <property type="entry name" value="Ribosomal_bL32_bact"/>
</dbReference>
<dbReference type="InterPro" id="IPR011332">
    <property type="entry name" value="Ribosomal_zn-bd"/>
</dbReference>
<dbReference type="NCBIfam" id="TIGR01031">
    <property type="entry name" value="rpmF_bact"/>
    <property type="match status" value="1"/>
</dbReference>
<dbReference type="PANTHER" id="PTHR35534">
    <property type="entry name" value="50S RIBOSOMAL PROTEIN L32"/>
    <property type="match status" value="1"/>
</dbReference>
<dbReference type="PANTHER" id="PTHR35534:SF1">
    <property type="entry name" value="LARGE RIBOSOMAL SUBUNIT PROTEIN BL32"/>
    <property type="match status" value="1"/>
</dbReference>
<dbReference type="Pfam" id="PF01783">
    <property type="entry name" value="Ribosomal_L32p"/>
    <property type="match status" value="1"/>
</dbReference>
<dbReference type="SUPFAM" id="SSF57829">
    <property type="entry name" value="Zn-binding ribosomal proteins"/>
    <property type="match status" value="1"/>
</dbReference>
<organism>
    <name type="scientific">Methylococcus capsulatus (strain ATCC 33009 / NCIMB 11132 / Bath)</name>
    <dbReference type="NCBI Taxonomy" id="243233"/>
    <lineage>
        <taxon>Bacteria</taxon>
        <taxon>Pseudomonadati</taxon>
        <taxon>Pseudomonadota</taxon>
        <taxon>Gammaproteobacteria</taxon>
        <taxon>Methylococcales</taxon>
        <taxon>Methylococcaceae</taxon>
        <taxon>Methylococcus</taxon>
    </lineage>
</organism>
<sequence>MAVQQNRKTRSKRGMRRSHDALSASALSVEANTGETHLRHHVSPDGYYRGRRVIAPKHGDETEE</sequence>
<feature type="chain" id="PRO_0000225738" description="Large ribosomal subunit protein bL32">
    <location>
        <begin position="1"/>
        <end position="64"/>
    </location>
</feature>
<feature type="region of interest" description="Disordered" evidence="2">
    <location>
        <begin position="1"/>
        <end position="64"/>
    </location>
</feature>
<feature type="compositionally biased region" description="Basic residues" evidence="2">
    <location>
        <begin position="7"/>
        <end position="16"/>
    </location>
</feature>
<comment type="similarity">
    <text evidence="1">Belongs to the bacterial ribosomal protein bL32 family.</text>
</comment>